<evidence type="ECO:0000255" key="1">
    <source>
        <dbReference type="HAMAP-Rule" id="MF_00435"/>
    </source>
</evidence>
<evidence type="ECO:0000255" key="2">
    <source>
        <dbReference type="PROSITE-ProRule" id="PRU01197"/>
    </source>
</evidence>
<evidence type="ECO:0000255" key="3">
    <source>
        <dbReference type="PROSITE-ProRule" id="PRU01198"/>
    </source>
</evidence>
<dbReference type="EC" id="1.1.1.86" evidence="1"/>
<dbReference type="EMBL" id="CP000010">
    <property type="protein sequence ID" value="AAU49867.1"/>
    <property type="molecule type" value="Genomic_DNA"/>
</dbReference>
<dbReference type="RefSeq" id="WP_004185539.1">
    <property type="nucleotide sequence ID" value="NC_006348.1"/>
</dbReference>
<dbReference type="RefSeq" id="YP_103449.1">
    <property type="nucleotide sequence ID" value="NC_006348.1"/>
</dbReference>
<dbReference type="SMR" id="Q62IM0"/>
<dbReference type="GeneID" id="93059680"/>
<dbReference type="KEGG" id="bma:BMA1846"/>
<dbReference type="PATRIC" id="fig|243160.12.peg.1882"/>
<dbReference type="eggNOG" id="COG0059">
    <property type="taxonomic scope" value="Bacteria"/>
</dbReference>
<dbReference type="HOGENOM" id="CLU_033821_0_1_4"/>
<dbReference type="UniPathway" id="UPA00047">
    <property type="reaction ID" value="UER00056"/>
</dbReference>
<dbReference type="UniPathway" id="UPA00049">
    <property type="reaction ID" value="UER00060"/>
</dbReference>
<dbReference type="Proteomes" id="UP000006693">
    <property type="component" value="Chromosome 1"/>
</dbReference>
<dbReference type="GO" id="GO:0005829">
    <property type="term" value="C:cytosol"/>
    <property type="evidence" value="ECO:0007669"/>
    <property type="project" value="TreeGrafter"/>
</dbReference>
<dbReference type="GO" id="GO:0004455">
    <property type="term" value="F:ketol-acid reductoisomerase activity"/>
    <property type="evidence" value="ECO:0007669"/>
    <property type="project" value="UniProtKB-UniRule"/>
</dbReference>
<dbReference type="GO" id="GO:0000287">
    <property type="term" value="F:magnesium ion binding"/>
    <property type="evidence" value="ECO:0007669"/>
    <property type="project" value="UniProtKB-UniRule"/>
</dbReference>
<dbReference type="GO" id="GO:0050661">
    <property type="term" value="F:NADP binding"/>
    <property type="evidence" value="ECO:0007669"/>
    <property type="project" value="InterPro"/>
</dbReference>
<dbReference type="GO" id="GO:0009097">
    <property type="term" value="P:isoleucine biosynthetic process"/>
    <property type="evidence" value="ECO:0007669"/>
    <property type="project" value="UniProtKB-UniRule"/>
</dbReference>
<dbReference type="GO" id="GO:0009099">
    <property type="term" value="P:L-valine biosynthetic process"/>
    <property type="evidence" value="ECO:0007669"/>
    <property type="project" value="UniProtKB-UniRule"/>
</dbReference>
<dbReference type="FunFam" id="3.40.50.720:FF:000023">
    <property type="entry name" value="Ketol-acid reductoisomerase (NADP(+))"/>
    <property type="match status" value="1"/>
</dbReference>
<dbReference type="Gene3D" id="6.10.240.10">
    <property type="match status" value="1"/>
</dbReference>
<dbReference type="Gene3D" id="3.40.50.720">
    <property type="entry name" value="NAD(P)-binding Rossmann-like Domain"/>
    <property type="match status" value="1"/>
</dbReference>
<dbReference type="HAMAP" id="MF_00435">
    <property type="entry name" value="IlvC"/>
    <property type="match status" value="1"/>
</dbReference>
<dbReference type="InterPro" id="IPR008927">
    <property type="entry name" value="6-PGluconate_DH-like_C_sf"/>
</dbReference>
<dbReference type="InterPro" id="IPR013023">
    <property type="entry name" value="KARI"/>
</dbReference>
<dbReference type="InterPro" id="IPR000506">
    <property type="entry name" value="KARI_C"/>
</dbReference>
<dbReference type="InterPro" id="IPR013116">
    <property type="entry name" value="KARI_N"/>
</dbReference>
<dbReference type="InterPro" id="IPR014359">
    <property type="entry name" value="KARI_prok"/>
</dbReference>
<dbReference type="InterPro" id="IPR036291">
    <property type="entry name" value="NAD(P)-bd_dom_sf"/>
</dbReference>
<dbReference type="NCBIfam" id="TIGR00465">
    <property type="entry name" value="ilvC"/>
    <property type="match status" value="1"/>
</dbReference>
<dbReference type="NCBIfam" id="NF004017">
    <property type="entry name" value="PRK05479.1"/>
    <property type="match status" value="1"/>
</dbReference>
<dbReference type="NCBIfam" id="NF009940">
    <property type="entry name" value="PRK13403.1"/>
    <property type="match status" value="1"/>
</dbReference>
<dbReference type="PANTHER" id="PTHR21371">
    <property type="entry name" value="KETOL-ACID REDUCTOISOMERASE, MITOCHONDRIAL"/>
    <property type="match status" value="1"/>
</dbReference>
<dbReference type="PANTHER" id="PTHR21371:SF1">
    <property type="entry name" value="KETOL-ACID REDUCTOISOMERASE, MITOCHONDRIAL"/>
    <property type="match status" value="1"/>
</dbReference>
<dbReference type="Pfam" id="PF01450">
    <property type="entry name" value="KARI_C"/>
    <property type="match status" value="1"/>
</dbReference>
<dbReference type="Pfam" id="PF07991">
    <property type="entry name" value="KARI_N"/>
    <property type="match status" value="1"/>
</dbReference>
<dbReference type="PIRSF" id="PIRSF000116">
    <property type="entry name" value="IlvC_gammaproteo"/>
    <property type="match status" value="1"/>
</dbReference>
<dbReference type="SUPFAM" id="SSF48179">
    <property type="entry name" value="6-phosphogluconate dehydrogenase C-terminal domain-like"/>
    <property type="match status" value="1"/>
</dbReference>
<dbReference type="SUPFAM" id="SSF51735">
    <property type="entry name" value="NAD(P)-binding Rossmann-fold domains"/>
    <property type="match status" value="1"/>
</dbReference>
<dbReference type="PROSITE" id="PS51851">
    <property type="entry name" value="KARI_C"/>
    <property type="match status" value="1"/>
</dbReference>
<dbReference type="PROSITE" id="PS51850">
    <property type="entry name" value="KARI_N"/>
    <property type="match status" value="1"/>
</dbReference>
<accession>Q62IM0</accession>
<proteinExistence type="inferred from homology"/>
<organism>
    <name type="scientific">Burkholderia mallei (strain ATCC 23344)</name>
    <dbReference type="NCBI Taxonomy" id="243160"/>
    <lineage>
        <taxon>Bacteria</taxon>
        <taxon>Pseudomonadati</taxon>
        <taxon>Pseudomonadota</taxon>
        <taxon>Betaproteobacteria</taxon>
        <taxon>Burkholderiales</taxon>
        <taxon>Burkholderiaceae</taxon>
        <taxon>Burkholderia</taxon>
        <taxon>pseudomallei group</taxon>
    </lineage>
</organism>
<feature type="chain" id="PRO_0000226165" description="Ketol-acid reductoisomerase (NADP(+))">
    <location>
        <begin position="1"/>
        <end position="338"/>
    </location>
</feature>
<feature type="domain" description="KARI N-terminal Rossmann" evidence="2">
    <location>
        <begin position="1"/>
        <end position="181"/>
    </location>
</feature>
<feature type="domain" description="KARI C-terminal knotted" evidence="3">
    <location>
        <begin position="182"/>
        <end position="327"/>
    </location>
</feature>
<feature type="active site" evidence="1">
    <location>
        <position position="107"/>
    </location>
</feature>
<feature type="binding site" evidence="1">
    <location>
        <begin position="24"/>
        <end position="27"/>
    </location>
    <ligand>
        <name>NADP(+)</name>
        <dbReference type="ChEBI" id="CHEBI:58349"/>
    </ligand>
</feature>
<feature type="binding site" evidence="1">
    <location>
        <position position="47"/>
    </location>
    <ligand>
        <name>NADP(+)</name>
        <dbReference type="ChEBI" id="CHEBI:58349"/>
    </ligand>
</feature>
<feature type="binding site" evidence="1">
    <location>
        <position position="52"/>
    </location>
    <ligand>
        <name>NADP(+)</name>
        <dbReference type="ChEBI" id="CHEBI:58349"/>
    </ligand>
</feature>
<feature type="binding site" evidence="1">
    <location>
        <position position="133"/>
    </location>
    <ligand>
        <name>NADP(+)</name>
        <dbReference type="ChEBI" id="CHEBI:58349"/>
    </ligand>
</feature>
<feature type="binding site" evidence="1">
    <location>
        <position position="190"/>
    </location>
    <ligand>
        <name>Mg(2+)</name>
        <dbReference type="ChEBI" id="CHEBI:18420"/>
        <label>1</label>
    </ligand>
</feature>
<feature type="binding site" evidence="1">
    <location>
        <position position="190"/>
    </location>
    <ligand>
        <name>Mg(2+)</name>
        <dbReference type="ChEBI" id="CHEBI:18420"/>
        <label>2</label>
    </ligand>
</feature>
<feature type="binding site" evidence="1">
    <location>
        <position position="194"/>
    </location>
    <ligand>
        <name>Mg(2+)</name>
        <dbReference type="ChEBI" id="CHEBI:18420"/>
        <label>1</label>
    </ligand>
</feature>
<feature type="binding site" evidence="1">
    <location>
        <position position="226"/>
    </location>
    <ligand>
        <name>Mg(2+)</name>
        <dbReference type="ChEBI" id="CHEBI:18420"/>
        <label>2</label>
    </ligand>
</feature>
<feature type="binding site" evidence="1">
    <location>
        <position position="230"/>
    </location>
    <ligand>
        <name>Mg(2+)</name>
        <dbReference type="ChEBI" id="CHEBI:18420"/>
        <label>2</label>
    </ligand>
</feature>
<feature type="binding site" evidence="1">
    <location>
        <position position="251"/>
    </location>
    <ligand>
        <name>substrate</name>
    </ligand>
</feature>
<reference key="1">
    <citation type="journal article" date="2004" name="Proc. Natl. Acad. Sci. U.S.A.">
        <title>Structural flexibility in the Burkholderia mallei genome.</title>
        <authorList>
            <person name="Nierman W.C."/>
            <person name="DeShazer D."/>
            <person name="Kim H.S."/>
            <person name="Tettelin H."/>
            <person name="Nelson K.E."/>
            <person name="Feldblyum T.V."/>
            <person name="Ulrich R.L."/>
            <person name="Ronning C.M."/>
            <person name="Brinkac L.M."/>
            <person name="Daugherty S.C."/>
            <person name="Davidsen T.D."/>
            <person name="DeBoy R.T."/>
            <person name="Dimitrov G."/>
            <person name="Dodson R.J."/>
            <person name="Durkin A.S."/>
            <person name="Gwinn M.L."/>
            <person name="Haft D.H."/>
            <person name="Khouri H.M."/>
            <person name="Kolonay J.F."/>
            <person name="Madupu R."/>
            <person name="Mohammoud Y."/>
            <person name="Nelson W.C."/>
            <person name="Radune D."/>
            <person name="Romero C.M."/>
            <person name="Sarria S."/>
            <person name="Selengut J."/>
            <person name="Shamblin C."/>
            <person name="Sullivan S.A."/>
            <person name="White O."/>
            <person name="Yu Y."/>
            <person name="Zafar N."/>
            <person name="Zhou L."/>
            <person name="Fraser C.M."/>
        </authorList>
    </citation>
    <scope>NUCLEOTIDE SEQUENCE [LARGE SCALE GENOMIC DNA]</scope>
    <source>
        <strain>ATCC 23344</strain>
    </source>
</reference>
<name>ILVC_BURMA</name>
<keyword id="KW-0028">Amino-acid biosynthesis</keyword>
<keyword id="KW-0100">Branched-chain amino acid biosynthesis</keyword>
<keyword id="KW-0460">Magnesium</keyword>
<keyword id="KW-0479">Metal-binding</keyword>
<keyword id="KW-0521">NADP</keyword>
<keyword id="KW-0560">Oxidoreductase</keyword>
<keyword id="KW-1185">Reference proteome</keyword>
<protein>
    <recommendedName>
        <fullName evidence="1">Ketol-acid reductoisomerase (NADP(+))</fullName>
        <shortName evidence="1">KARI</shortName>
        <ecNumber evidence="1">1.1.1.86</ecNumber>
    </recommendedName>
    <alternativeName>
        <fullName evidence="1">Acetohydroxy-acid isomeroreductase</fullName>
        <shortName evidence="1">AHIR</shortName>
    </alternativeName>
    <alternativeName>
        <fullName evidence="1">Alpha-keto-beta-hydroxylacyl reductoisomerase</fullName>
    </alternativeName>
    <alternativeName>
        <fullName evidence="1">Ketol-acid reductoisomerase type 1</fullName>
    </alternativeName>
    <alternativeName>
        <fullName evidence="1">Ketol-acid reductoisomerase type I</fullName>
    </alternativeName>
</protein>
<gene>
    <name evidence="1" type="primary">ilvC</name>
    <name type="ordered locus">BMA1846</name>
</gene>
<sequence length="338" mass="36267">MKVFYDKDADLSLIKGKQVTIIGYGSQGHAHALNLKDSGVNVTVGLRRGGASWSKAENAGLAVKEVAEAVKGADVVMMLLPDEQIAAVYAQEVHANIKEGAALAFAHGFNVHYGQVIPRADLDVIMVAPKAPGHTVRGTYAQGGGVPHLIAVAQDKSGAARDIALSYAAANGGGRAGIIETNFREETETDLFGEQAVLCGGTVELIKAGFETLVEAGYAPEMAYFECLHELKLIVDLIYEGGIANMNYSISNNAEYGEYVTGPRVVTEETKKAMKQCLTDIQTGEYAKSFILENKAGAPTLQSRRRLTAEHQIEQVGSKLRAMMPWIAKNKLVDQSKN</sequence>
<comment type="function">
    <text evidence="1">Involved in the biosynthesis of branched-chain amino acids (BCAA). Catalyzes an alkyl-migration followed by a ketol-acid reduction of (S)-2-acetolactate (S2AL) to yield (R)-2,3-dihydroxy-isovalerate. In the isomerase reaction, S2AL is rearranged via a Mg-dependent methyl migration to produce 3-hydroxy-3-methyl-2-ketobutyrate (HMKB). In the reductase reaction, this 2-ketoacid undergoes a metal-dependent reduction by NADPH to yield (R)-2,3-dihydroxy-isovalerate.</text>
</comment>
<comment type="catalytic activity">
    <reaction evidence="1">
        <text>(2R)-2,3-dihydroxy-3-methylbutanoate + NADP(+) = (2S)-2-acetolactate + NADPH + H(+)</text>
        <dbReference type="Rhea" id="RHEA:22068"/>
        <dbReference type="ChEBI" id="CHEBI:15378"/>
        <dbReference type="ChEBI" id="CHEBI:49072"/>
        <dbReference type="ChEBI" id="CHEBI:57783"/>
        <dbReference type="ChEBI" id="CHEBI:58349"/>
        <dbReference type="ChEBI" id="CHEBI:58476"/>
        <dbReference type="EC" id="1.1.1.86"/>
    </reaction>
</comment>
<comment type="catalytic activity">
    <reaction evidence="1">
        <text>(2R,3R)-2,3-dihydroxy-3-methylpentanoate + NADP(+) = (S)-2-ethyl-2-hydroxy-3-oxobutanoate + NADPH + H(+)</text>
        <dbReference type="Rhea" id="RHEA:13493"/>
        <dbReference type="ChEBI" id="CHEBI:15378"/>
        <dbReference type="ChEBI" id="CHEBI:49256"/>
        <dbReference type="ChEBI" id="CHEBI:49258"/>
        <dbReference type="ChEBI" id="CHEBI:57783"/>
        <dbReference type="ChEBI" id="CHEBI:58349"/>
        <dbReference type="EC" id="1.1.1.86"/>
    </reaction>
</comment>
<comment type="cofactor">
    <cofactor evidence="1">
        <name>Mg(2+)</name>
        <dbReference type="ChEBI" id="CHEBI:18420"/>
    </cofactor>
    <text evidence="1">Binds 2 magnesium ions per subunit.</text>
</comment>
<comment type="pathway">
    <text evidence="1">Amino-acid biosynthesis; L-isoleucine biosynthesis; L-isoleucine from 2-oxobutanoate: step 2/4.</text>
</comment>
<comment type="pathway">
    <text evidence="1">Amino-acid biosynthesis; L-valine biosynthesis; L-valine from pyruvate: step 2/4.</text>
</comment>
<comment type="similarity">
    <text evidence="1">Belongs to the ketol-acid reductoisomerase family.</text>
</comment>